<proteinExistence type="inferred from homology"/>
<sequence length="84" mass="8774">MAHKKGASSTRNGRDSNAQRLGVKRFGGQAVNAGEILVRQRGTHFHPGAGVGRGGDDTLFALQAGAVQFGTHRGRKVVNIVPVA</sequence>
<feature type="chain" id="PRO_0000181175" description="Large ribosomal subunit protein bL27">
    <location>
        <begin position="1"/>
        <end position="84"/>
    </location>
</feature>
<feature type="region of interest" description="Disordered" evidence="2">
    <location>
        <begin position="1"/>
        <end position="22"/>
    </location>
</feature>
<feature type="compositionally biased region" description="Polar residues" evidence="2">
    <location>
        <begin position="7"/>
        <end position="19"/>
    </location>
</feature>
<reference key="1">
    <citation type="journal article" date="2002" name="Nature">
        <title>Complete genome sequence of the model actinomycete Streptomyces coelicolor A3(2).</title>
        <authorList>
            <person name="Bentley S.D."/>
            <person name="Chater K.F."/>
            <person name="Cerdeno-Tarraga A.-M."/>
            <person name="Challis G.L."/>
            <person name="Thomson N.R."/>
            <person name="James K.D."/>
            <person name="Harris D.E."/>
            <person name="Quail M.A."/>
            <person name="Kieser H."/>
            <person name="Harper D."/>
            <person name="Bateman A."/>
            <person name="Brown S."/>
            <person name="Chandra G."/>
            <person name="Chen C.W."/>
            <person name="Collins M."/>
            <person name="Cronin A."/>
            <person name="Fraser A."/>
            <person name="Goble A."/>
            <person name="Hidalgo J."/>
            <person name="Hornsby T."/>
            <person name="Howarth S."/>
            <person name="Huang C.-H."/>
            <person name="Kieser T."/>
            <person name="Larke L."/>
            <person name="Murphy L.D."/>
            <person name="Oliver K."/>
            <person name="O'Neil S."/>
            <person name="Rabbinowitsch E."/>
            <person name="Rajandream M.A."/>
            <person name="Rutherford K.M."/>
            <person name="Rutter S."/>
            <person name="Seeger K."/>
            <person name="Saunders D."/>
            <person name="Sharp S."/>
            <person name="Squares R."/>
            <person name="Squares S."/>
            <person name="Taylor K."/>
            <person name="Warren T."/>
            <person name="Wietzorrek A."/>
            <person name="Woodward J.R."/>
            <person name="Barrell B.G."/>
            <person name="Parkhill J."/>
            <person name="Hopwood D.A."/>
        </authorList>
    </citation>
    <scope>NUCLEOTIDE SEQUENCE [LARGE SCALE GENOMIC DNA]</scope>
    <source>
        <strain>ATCC BAA-471 / A3(2) / M145</strain>
    </source>
</reference>
<organism>
    <name type="scientific">Streptomyces coelicolor (strain ATCC BAA-471 / A3(2) / M145)</name>
    <dbReference type="NCBI Taxonomy" id="100226"/>
    <lineage>
        <taxon>Bacteria</taxon>
        <taxon>Bacillati</taxon>
        <taxon>Actinomycetota</taxon>
        <taxon>Actinomycetes</taxon>
        <taxon>Kitasatosporales</taxon>
        <taxon>Streptomycetaceae</taxon>
        <taxon>Streptomyces</taxon>
        <taxon>Streptomyces albidoflavus group</taxon>
    </lineage>
</organism>
<accession>Q9L1I1</accession>
<keyword id="KW-1185">Reference proteome</keyword>
<keyword id="KW-0687">Ribonucleoprotein</keyword>
<keyword id="KW-0689">Ribosomal protein</keyword>
<protein>
    <recommendedName>
        <fullName evidence="1">Large ribosomal subunit protein bL27</fullName>
    </recommendedName>
    <alternativeName>
        <fullName evidence="3">50S ribosomal protein L27</fullName>
    </alternativeName>
</protein>
<name>RL27_STRCO</name>
<dbReference type="EMBL" id="AL939113">
    <property type="protein sequence ID" value="CAB75377.1"/>
    <property type="molecule type" value="Genomic_DNA"/>
</dbReference>
<dbReference type="RefSeq" id="NP_626833.1">
    <property type="nucleotide sequence ID" value="NC_003888.3"/>
</dbReference>
<dbReference type="RefSeq" id="WP_003976205.1">
    <property type="nucleotide sequence ID" value="NZ_VNID01000001.1"/>
</dbReference>
<dbReference type="SMR" id="Q9L1I1"/>
<dbReference type="FunCoup" id="Q9L1I1">
    <property type="interactions" value="223"/>
</dbReference>
<dbReference type="STRING" id="100226.gene:17760200"/>
<dbReference type="PaxDb" id="100226-SCO2596"/>
<dbReference type="GeneID" id="97451672"/>
<dbReference type="KEGG" id="sco:SCO2596"/>
<dbReference type="PATRIC" id="fig|100226.15.peg.2642"/>
<dbReference type="eggNOG" id="COG0211">
    <property type="taxonomic scope" value="Bacteria"/>
</dbReference>
<dbReference type="HOGENOM" id="CLU_095424_4_0_11"/>
<dbReference type="InParanoid" id="Q9L1I1"/>
<dbReference type="OrthoDB" id="9803474at2"/>
<dbReference type="PhylomeDB" id="Q9L1I1"/>
<dbReference type="PRO" id="PR:Q9L1I1"/>
<dbReference type="Proteomes" id="UP000001973">
    <property type="component" value="Chromosome"/>
</dbReference>
<dbReference type="GO" id="GO:0022625">
    <property type="term" value="C:cytosolic large ribosomal subunit"/>
    <property type="evidence" value="ECO:0000318"/>
    <property type="project" value="GO_Central"/>
</dbReference>
<dbReference type="GO" id="GO:0003735">
    <property type="term" value="F:structural constituent of ribosome"/>
    <property type="evidence" value="ECO:0000318"/>
    <property type="project" value="GO_Central"/>
</dbReference>
<dbReference type="GO" id="GO:0006412">
    <property type="term" value="P:translation"/>
    <property type="evidence" value="ECO:0007669"/>
    <property type="project" value="UniProtKB-UniRule"/>
</dbReference>
<dbReference type="FunFam" id="2.40.50.100:FF:000020">
    <property type="entry name" value="50S ribosomal protein L27"/>
    <property type="match status" value="1"/>
</dbReference>
<dbReference type="Gene3D" id="2.40.50.100">
    <property type="match status" value="1"/>
</dbReference>
<dbReference type="HAMAP" id="MF_00539">
    <property type="entry name" value="Ribosomal_bL27"/>
    <property type="match status" value="1"/>
</dbReference>
<dbReference type="InterPro" id="IPR001684">
    <property type="entry name" value="Ribosomal_bL27"/>
</dbReference>
<dbReference type="InterPro" id="IPR018261">
    <property type="entry name" value="Ribosomal_bL27_CS"/>
</dbReference>
<dbReference type="NCBIfam" id="TIGR00062">
    <property type="entry name" value="L27"/>
    <property type="match status" value="1"/>
</dbReference>
<dbReference type="PANTHER" id="PTHR15893:SF0">
    <property type="entry name" value="LARGE RIBOSOMAL SUBUNIT PROTEIN BL27M"/>
    <property type="match status" value="1"/>
</dbReference>
<dbReference type="PANTHER" id="PTHR15893">
    <property type="entry name" value="RIBOSOMAL PROTEIN L27"/>
    <property type="match status" value="1"/>
</dbReference>
<dbReference type="Pfam" id="PF01016">
    <property type="entry name" value="Ribosomal_L27"/>
    <property type="match status" value="1"/>
</dbReference>
<dbReference type="PRINTS" id="PR00063">
    <property type="entry name" value="RIBOSOMALL27"/>
</dbReference>
<dbReference type="SUPFAM" id="SSF110324">
    <property type="entry name" value="Ribosomal L27 protein-like"/>
    <property type="match status" value="1"/>
</dbReference>
<dbReference type="PROSITE" id="PS00831">
    <property type="entry name" value="RIBOSOMAL_L27"/>
    <property type="match status" value="1"/>
</dbReference>
<comment type="similarity">
    <text evidence="1">Belongs to the bacterial ribosomal protein bL27 family.</text>
</comment>
<evidence type="ECO:0000255" key="1">
    <source>
        <dbReference type="HAMAP-Rule" id="MF_00539"/>
    </source>
</evidence>
<evidence type="ECO:0000256" key="2">
    <source>
        <dbReference type="SAM" id="MobiDB-lite"/>
    </source>
</evidence>
<evidence type="ECO:0000305" key="3"/>
<gene>
    <name evidence="1" type="primary">rpmA</name>
    <name type="ordered locus">SCO2596</name>
    <name type="ORF">SCC88.07c</name>
</gene>